<comment type="function">
    <text evidence="8">Lytic polysaccharide monooxygenase (LPMO) that depolymerizes crystalline and amorphous polysaccharides via the oxidation of scissile alpha- or beta-(1-4)-glycosidic bonds, yielding C4 oxidation products (PubMed:33199373). Catalysis by LPMOs requires the reduction of the active-site copper from Cu(II) to Cu(I) by a reducing agent and H(2)O(2) or O(2) as a cosubstrate (PubMed:33199373). Active on cellulose and cello-oligosaccharides, as well as plant cell wall-derived hemicellulosic polysaccharides (PubMed:33199373). Also active on cello-oligosaccharides such as cellohexaose, cellopentaose or cellotetraose (PubMed:33199373).</text>
</comment>
<comment type="catalytic activity">
    <reaction evidence="8">
        <text>[(1-&gt;4)-beta-D-glucosyl]n+m + reduced acceptor + O2 = 4-dehydro-beta-D-glucosyl-[(1-&gt;4)-beta-D-glucosyl]n-1 + [(1-&gt;4)-beta-D-glucosyl]m + acceptor + H2O.</text>
        <dbReference type="EC" id="1.14.99.56"/>
    </reaction>
</comment>
<comment type="cofactor">
    <cofactor evidence="3">
        <name>Cu(2+)</name>
        <dbReference type="ChEBI" id="CHEBI:29036"/>
    </cofactor>
    <text evidence="3">Binds 1 copper ion per subunit.</text>
</comment>
<comment type="subcellular location">
    <subcellularLocation>
        <location evidence="11">Secreted</location>
    </subcellularLocation>
</comment>
<comment type="domain">
    <text evidence="4">Has a modular structure: an endo-beta-1,4-glucanase catalytic module at the N-terminus, a linker rich in serines and threonines, and a C-terminal carbohydrate-binding module (CBM). The CBM domain is essential for binding to and subsequent oxidative degradation of polysaccharide substrate.</text>
</comment>
<comment type="biotechnology">
    <text evidence="3">Lignocellulose is the most abundant polymeric composite on Earth and is a recalcitrant but promising renewable substrate for industrial biotechnology applications. Together with cellobiose dehydrogenases (CDHs) an enzymatic system capable of oxidative cellulose cleavage is formed, which increases the efficiency of cellulases and put LPMOs at focus of biofuel research.</text>
</comment>
<comment type="similarity">
    <text evidence="10">Belongs to the polysaccharide monooxygenase AA9 family.</text>
</comment>
<proteinExistence type="evidence at protein level"/>
<organism>
    <name type="scientific">Aspergillus oryzae (strain ATCC 42149 / RIB 40)</name>
    <name type="common">Yellow koji mold</name>
    <dbReference type="NCBI Taxonomy" id="510516"/>
    <lineage>
        <taxon>Eukaryota</taxon>
        <taxon>Fungi</taxon>
        <taxon>Dikarya</taxon>
        <taxon>Ascomycota</taxon>
        <taxon>Pezizomycotina</taxon>
        <taxon>Eurotiomycetes</taxon>
        <taxon>Eurotiomycetidae</taxon>
        <taxon>Eurotiales</taxon>
        <taxon>Aspergillaceae</taxon>
        <taxon>Aspergillus</taxon>
        <taxon>Aspergillus subgen. Circumdati</taxon>
    </lineage>
</organism>
<reference key="1">
    <citation type="journal article" date="2005" name="Nature">
        <title>Genome sequencing and analysis of Aspergillus oryzae.</title>
        <authorList>
            <person name="Machida M."/>
            <person name="Asai K."/>
            <person name="Sano M."/>
            <person name="Tanaka T."/>
            <person name="Kumagai T."/>
            <person name="Terai G."/>
            <person name="Kusumoto K."/>
            <person name="Arima T."/>
            <person name="Akita O."/>
            <person name="Kashiwagi Y."/>
            <person name="Abe K."/>
            <person name="Gomi K."/>
            <person name="Horiuchi H."/>
            <person name="Kitamoto K."/>
            <person name="Kobayashi T."/>
            <person name="Takeuchi M."/>
            <person name="Denning D.W."/>
            <person name="Galagan J.E."/>
            <person name="Nierman W.C."/>
            <person name="Yu J."/>
            <person name="Archer D.B."/>
            <person name="Bennett J.W."/>
            <person name="Bhatnagar D."/>
            <person name="Cleveland T.E."/>
            <person name="Fedorova N.D."/>
            <person name="Gotoh O."/>
            <person name="Horikawa H."/>
            <person name="Hosoyama A."/>
            <person name="Ichinomiya M."/>
            <person name="Igarashi R."/>
            <person name="Iwashita K."/>
            <person name="Juvvadi P.R."/>
            <person name="Kato M."/>
            <person name="Kato Y."/>
            <person name="Kin T."/>
            <person name="Kokubun A."/>
            <person name="Maeda H."/>
            <person name="Maeyama N."/>
            <person name="Maruyama J."/>
            <person name="Nagasaki H."/>
            <person name="Nakajima T."/>
            <person name="Oda K."/>
            <person name="Okada K."/>
            <person name="Paulsen I."/>
            <person name="Sakamoto K."/>
            <person name="Sawano T."/>
            <person name="Takahashi M."/>
            <person name="Takase K."/>
            <person name="Terabayashi Y."/>
            <person name="Wortman J.R."/>
            <person name="Yamada O."/>
            <person name="Yamagata Y."/>
            <person name="Anazawa H."/>
            <person name="Hata Y."/>
            <person name="Koide Y."/>
            <person name="Komori T."/>
            <person name="Koyama Y."/>
            <person name="Minetoki T."/>
            <person name="Suharnan S."/>
            <person name="Tanaka A."/>
            <person name="Isono K."/>
            <person name="Kuhara S."/>
            <person name="Ogasawara N."/>
            <person name="Kikuchi H."/>
        </authorList>
    </citation>
    <scope>NUCLEOTIDE SEQUENCE [LARGE SCALE GENOMIC DNA]</scope>
    <source>
        <strain>ATCC 42149 / RIB 40</strain>
    </source>
</reference>
<reference key="2">
    <citation type="journal article" date="2021" name="J. Biol. Chem.">
        <title>Identification of the molecular determinants driving the substrate specificity of fungal lytic polysaccharide monooxygenases (LPMOs).</title>
        <authorList>
            <person name="Frandsen K.E.H."/>
            <person name="Haon M."/>
            <person name="Grisel S."/>
            <person name="Henrissat B."/>
            <person name="Lo Leggio L."/>
            <person name="Berrin J.G."/>
        </authorList>
    </citation>
    <scope>FUNCTION</scope>
    <scope>CATALYTIC ACTIVITY</scope>
</reference>
<feature type="signal peptide" evidence="5">
    <location>
        <begin position="1"/>
        <end position="20"/>
    </location>
</feature>
<feature type="chain" id="PRO_0000394065" description="AA9 family lytic polysaccharide monooxygenase A">
    <location>
        <begin position="21"/>
        <end position="367"/>
    </location>
</feature>
<feature type="domain" description="CBM1" evidence="6">
    <location>
        <begin position="329"/>
        <end position="365"/>
    </location>
</feature>
<feature type="region of interest" description="Disordered" evidence="7">
    <location>
        <begin position="37"/>
        <end position="56"/>
    </location>
</feature>
<feature type="region of interest" description="Disordered" evidence="7">
    <location>
        <begin position="234"/>
        <end position="287"/>
    </location>
</feature>
<feature type="compositionally biased region" description="Low complexity" evidence="7">
    <location>
        <begin position="235"/>
        <end position="262"/>
    </location>
</feature>
<feature type="compositionally biased region" description="Low complexity" evidence="7">
    <location>
        <begin position="270"/>
        <end position="287"/>
    </location>
</feature>
<feature type="binding site" evidence="1">
    <location>
        <position position="21"/>
    </location>
    <ligand>
        <name>Cu(2+)</name>
        <dbReference type="ChEBI" id="CHEBI:29036"/>
        <note>catalytic</note>
    </ligand>
</feature>
<feature type="binding site" evidence="1">
    <location>
        <position position="102"/>
    </location>
    <ligand>
        <name>Cu(2+)</name>
        <dbReference type="ChEBI" id="CHEBI:29036"/>
        <note>catalytic</note>
    </ligand>
</feature>
<feature type="binding site" evidence="2">
    <location>
        <position position="169"/>
    </location>
    <ligand>
        <name>O2</name>
        <dbReference type="ChEBI" id="CHEBI:15379"/>
    </ligand>
</feature>
<feature type="binding site" evidence="1">
    <location>
        <position position="180"/>
    </location>
    <ligand>
        <name>Cu(2+)</name>
        <dbReference type="ChEBI" id="CHEBI:29036"/>
        <note>catalytic</note>
    </ligand>
</feature>
<feature type="glycosylation site" description="N-linked (GlcNAc...) asparagine" evidence="5">
    <location>
        <position position="282"/>
    </location>
</feature>
<feature type="disulfide bond" evidence="1">
    <location>
        <begin position="63"/>
        <end position="183"/>
    </location>
</feature>
<sequence length="367" mass="38033">MKSSTFGMLALAAAAKLVSAHATVHAVWINDVDQGEGNSESGYIRSPPSNSPITDVTSKDMTCNVNNKATAKTLEVKAGDKITFEWHHDSRSDSDDIIASSHKGPIMVYMAPTEKGTAGNGWVKIAEDGYTDGTWAVDTLIKNRGKHSVTVPDVAAGEYLFRPEIIALHEGNRQGGAQFYMECVQVKVTSSGSKTLPEGVSIPGAYTATDKGILFDIYNSFDSYPFPGPAVWDGASGSSSSPSASASASAPAATSAAPAPSSFTTIAKQPATSSTEAPSTENTSTTSTIVSTTAAASATAPATPSSTSAIASSAASTNSVPQPSSNAGGAVKEWYQCGGLNYKGSTQCEEGLTCKKWNPYYYQCISA</sequence>
<keyword id="KW-0119">Carbohydrate metabolism</keyword>
<keyword id="KW-0136">Cellulose degradation</keyword>
<keyword id="KW-0186">Copper</keyword>
<keyword id="KW-1015">Disulfide bond</keyword>
<keyword id="KW-0325">Glycoprotein</keyword>
<keyword id="KW-0479">Metal-binding</keyword>
<keyword id="KW-0503">Monooxygenase</keyword>
<keyword id="KW-0560">Oxidoreductase</keyword>
<keyword id="KW-0624">Polysaccharide degradation</keyword>
<keyword id="KW-1185">Reference proteome</keyword>
<keyword id="KW-0964">Secreted</keyword>
<keyword id="KW-0732">Signal</keyword>
<name>LP9A_ASPOR</name>
<dbReference type="EC" id="1.14.99.56" evidence="8"/>
<dbReference type="EMBL" id="BA000049">
    <property type="protein sequence ID" value="BAE55582.1"/>
    <property type="molecule type" value="Genomic_DNA"/>
</dbReference>
<dbReference type="SMR" id="Q2US83"/>
<dbReference type="STRING" id="510516.Q2US83"/>
<dbReference type="CAZy" id="AA9">
    <property type="family name" value="Auxiliary Activities 9"/>
</dbReference>
<dbReference type="CAZy" id="CBM1">
    <property type="family name" value="Carbohydrate-Binding Module Family 1"/>
</dbReference>
<dbReference type="GlyCosmos" id="Q2US83">
    <property type="glycosylation" value="1 site, No reported glycans"/>
</dbReference>
<dbReference type="EnsemblFungi" id="BAE55582">
    <property type="protein sequence ID" value="BAE55582"/>
    <property type="gene ID" value="AO090005000531"/>
</dbReference>
<dbReference type="VEuPathDB" id="FungiDB:AO090005000531"/>
<dbReference type="HOGENOM" id="CLU_031730_0_0_1"/>
<dbReference type="OMA" id="YIDSPPN"/>
<dbReference type="Proteomes" id="UP000006564">
    <property type="component" value="Chromosome 1"/>
</dbReference>
<dbReference type="GO" id="GO:0005576">
    <property type="term" value="C:extracellular region"/>
    <property type="evidence" value="ECO:0007669"/>
    <property type="project" value="UniProtKB-SubCell"/>
</dbReference>
<dbReference type="GO" id="GO:0008810">
    <property type="term" value="F:cellulase activity"/>
    <property type="evidence" value="ECO:0007669"/>
    <property type="project" value="UniProtKB-EC"/>
</dbReference>
<dbReference type="GO" id="GO:0030248">
    <property type="term" value="F:cellulose binding"/>
    <property type="evidence" value="ECO:0007669"/>
    <property type="project" value="InterPro"/>
</dbReference>
<dbReference type="GO" id="GO:0046872">
    <property type="term" value="F:metal ion binding"/>
    <property type="evidence" value="ECO:0007669"/>
    <property type="project" value="UniProtKB-KW"/>
</dbReference>
<dbReference type="GO" id="GO:0004497">
    <property type="term" value="F:monooxygenase activity"/>
    <property type="evidence" value="ECO:0007669"/>
    <property type="project" value="UniProtKB-KW"/>
</dbReference>
<dbReference type="GO" id="GO:0030245">
    <property type="term" value="P:cellulose catabolic process"/>
    <property type="evidence" value="ECO:0007669"/>
    <property type="project" value="UniProtKB-KW"/>
</dbReference>
<dbReference type="CDD" id="cd21175">
    <property type="entry name" value="LPMO_AA9"/>
    <property type="match status" value="1"/>
</dbReference>
<dbReference type="Gene3D" id="2.70.50.70">
    <property type="match status" value="1"/>
</dbReference>
<dbReference type="InterPro" id="IPR049892">
    <property type="entry name" value="AA9"/>
</dbReference>
<dbReference type="InterPro" id="IPR005103">
    <property type="entry name" value="AA9_LPMO"/>
</dbReference>
<dbReference type="InterPro" id="IPR035971">
    <property type="entry name" value="CBD_sf"/>
</dbReference>
<dbReference type="InterPro" id="IPR000254">
    <property type="entry name" value="Cellulose-bd_dom_fun"/>
</dbReference>
<dbReference type="PANTHER" id="PTHR33353:SF17">
    <property type="entry name" value="ENDO-BETA-1,4-GLUCANASE D"/>
    <property type="match status" value="1"/>
</dbReference>
<dbReference type="PANTHER" id="PTHR33353">
    <property type="entry name" value="PUTATIVE (AFU_ORTHOLOGUE AFUA_1G12560)-RELATED"/>
    <property type="match status" value="1"/>
</dbReference>
<dbReference type="Pfam" id="PF03443">
    <property type="entry name" value="AA9"/>
    <property type="match status" value="1"/>
</dbReference>
<dbReference type="Pfam" id="PF00734">
    <property type="entry name" value="CBM_1"/>
    <property type="match status" value="1"/>
</dbReference>
<dbReference type="SMART" id="SM00236">
    <property type="entry name" value="fCBD"/>
    <property type="match status" value="1"/>
</dbReference>
<dbReference type="SUPFAM" id="SSF57180">
    <property type="entry name" value="Cellulose-binding domain"/>
    <property type="match status" value="1"/>
</dbReference>
<dbReference type="PROSITE" id="PS00562">
    <property type="entry name" value="CBM1_1"/>
    <property type="match status" value="1"/>
</dbReference>
<dbReference type="PROSITE" id="PS51164">
    <property type="entry name" value="CBM1_2"/>
    <property type="match status" value="1"/>
</dbReference>
<evidence type="ECO:0000250" key="1">
    <source>
        <dbReference type="UniProtKB" id="A0A223GEC9"/>
    </source>
</evidence>
<evidence type="ECO:0000250" key="2">
    <source>
        <dbReference type="UniProtKB" id="Q1K8B6"/>
    </source>
</evidence>
<evidence type="ECO:0000250" key="3">
    <source>
        <dbReference type="UniProtKB" id="Q4WP32"/>
    </source>
</evidence>
<evidence type="ECO:0000250" key="4">
    <source>
        <dbReference type="UniProtKB" id="Q7S439"/>
    </source>
</evidence>
<evidence type="ECO:0000255" key="5"/>
<evidence type="ECO:0000255" key="6">
    <source>
        <dbReference type="PROSITE-ProRule" id="PRU00597"/>
    </source>
</evidence>
<evidence type="ECO:0000256" key="7">
    <source>
        <dbReference type="SAM" id="MobiDB-lite"/>
    </source>
</evidence>
<evidence type="ECO:0000269" key="8">
    <source>
    </source>
</evidence>
<evidence type="ECO:0000303" key="9">
    <source>
    </source>
</evidence>
<evidence type="ECO:0000305" key="10"/>
<evidence type="ECO:0000305" key="11">
    <source>
    </source>
</evidence>
<accession>Q2US83</accession>
<gene>
    <name evidence="9" type="primary">AA9A</name>
    <name type="ORF">AO090005000531</name>
</gene>
<protein>
    <recommendedName>
        <fullName evidence="9">AA9 family lytic polysaccharide monooxygenase A</fullName>
        <shortName evidence="9">AgAA9A</shortName>
        <ecNumber evidence="8">1.14.99.56</ecNumber>
    </recommendedName>
    <alternativeName>
        <fullName evidence="10">Cellulase AA9A</fullName>
    </alternativeName>
    <alternativeName>
        <fullName evidence="10">Endo-beta-1,4-glucanase AA9A</fullName>
        <shortName evidence="10">Endoglucanase AA9A</shortName>
    </alternativeName>
    <alternativeName>
        <fullName evidence="10">Glycosyl hydrolase 61 family protein AA9A</fullName>
    </alternativeName>
</protein>